<keyword id="KW-1003">Cell membrane</keyword>
<keyword id="KW-0378">Hydrolase</keyword>
<keyword id="KW-0472">Membrane</keyword>
<keyword id="KW-0479">Metal-binding</keyword>
<keyword id="KW-0482">Metalloprotease</keyword>
<keyword id="KW-0645">Protease</keyword>
<keyword id="KW-1185">Reference proteome</keyword>
<keyword id="KW-0812">Transmembrane</keyword>
<keyword id="KW-1133">Transmembrane helix</keyword>
<keyword id="KW-0862">Zinc</keyword>
<protein>
    <recommendedName>
        <fullName evidence="1">Protease HtpX homolog 2</fullName>
        <ecNumber evidence="1">3.4.24.-</ecNumber>
    </recommendedName>
</protein>
<accession>Q8TP15</accession>
<sequence>MKRKWERDLGLQGRMLFTMFLLAAVYLFFLAFLSYSGTPPVFMLLFVGAFMGIQYFYSDKMVLWTTGAHIVSESEAPQLHDMVTRLCVIADIPKPQIAIVQTRVPNAFATGRSPNKAVVAVTTGIMDKLTPAELEAVLAHELSHVKNRDMAVLTIASFISTIAFYIVRYSLYFGGMGGDRRRDGGGILLVWLVSIAVWVVSFLLIRALSRYREFAADRGSAIITGQPANLASALMKISGLMDRVPSEDLRKVEGMNAFFIIPAISGSSFMDIFSTHPSVEKRLAQLEKMQKEMS</sequence>
<dbReference type="EC" id="3.4.24.-" evidence="1"/>
<dbReference type="EMBL" id="AE010299">
    <property type="protein sequence ID" value="AAM05510.1"/>
    <property type="molecule type" value="Genomic_DNA"/>
</dbReference>
<dbReference type="RefSeq" id="WP_011022098.1">
    <property type="nucleotide sequence ID" value="NC_003552.1"/>
</dbReference>
<dbReference type="STRING" id="188937.MA_2111"/>
<dbReference type="MEROPS" id="M48.004"/>
<dbReference type="EnsemblBacteria" id="AAM05510">
    <property type="protein sequence ID" value="AAM05510"/>
    <property type="gene ID" value="MA_2111"/>
</dbReference>
<dbReference type="GeneID" id="1474000"/>
<dbReference type="KEGG" id="mac:MA_2111"/>
<dbReference type="HOGENOM" id="CLU_042266_0_2_2"/>
<dbReference type="InParanoid" id="Q8TP15"/>
<dbReference type="OrthoDB" id="28389at2157"/>
<dbReference type="PhylomeDB" id="Q8TP15"/>
<dbReference type="Proteomes" id="UP000002487">
    <property type="component" value="Chromosome"/>
</dbReference>
<dbReference type="GO" id="GO:0005886">
    <property type="term" value="C:plasma membrane"/>
    <property type="evidence" value="ECO:0007669"/>
    <property type="project" value="UniProtKB-SubCell"/>
</dbReference>
<dbReference type="GO" id="GO:0004222">
    <property type="term" value="F:metalloendopeptidase activity"/>
    <property type="evidence" value="ECO:0007669"/>
    <property type="project" value="UniProtKB-UniRule"/>
</dbReference>
<dbReference type="GO" id="GO:0008270">
    <property type="term" value="F:zinc ion binding"/>
    <property type="evidence" value="ECO:0007669"/>
    <property type="project" value="UniProtKB-UniRule"/>
</dbReference>
<dbReference type="GO" id="GO:0006508">
    <property type="term" value="P:proteolysis"/>
    <property type="evidence" value="ECO:0007669"/>
    <property type="project" value="UniProtKB-KW"/>
</dbReference>
<dbReference type="CDD" id="cd07327">
    <property type="entry name" value="M48B_HtpX_like"/>
    <property type="match status" value="1"/>
</dbReference>
<dbReference type="Gene3D" id="3.30.2010.10">
    <property type="entry name" value="Metalloproteases ('zincins'), catalytic domain"/>
    <property type="match status" value="1"/>
</dbReference>
<dbReference type="HAMAP" id="MF_00188">
    <property type="entry name" value="Pept_M48_protease_HtpX"/>
    <property type="match status" value="1"/>
</dbReference>
<dbReference type="InterPro" id="IPR050083">
    <property type="entry name" value="HtpX_protease"/>
</dbReference>
<dbReference type="InterPro" id="IPR022919">
    <property type="entry name" value="Pept_M48_protease_HtpX"/>
</dbReference>
<dbReference type="InterPro" id="IPR001915">
    <property type="entry name" value="Peptidase_M48"/>
</dbReference>
<dbReference type="NCBIfam" id="NF002669">
    <property type="entry name" value="PRK02391.1"/>
    <property type="match status" value="1"/>
</dbReference>
<dbReference type="PANTHER" id="PTHR43221">
    <property type="entry name" value="PROTEASE HTPX"/>
    <property type="match status" value="1"/>
</dbReference>
<dbReference type="PANTHER" id="PTHR43221:SF2">
    <property type="entry name" value="PROTEASE HTPX HOMOLOG"/>
    <property type="match status" value="1"/>
</dbReference>
<dbReference type="Pfam" id="PF01435">
    <property type="entry name" value="Peptidase_M48"/>
    <property type="match status" value="1"/>
</dbReference>
<name>HTPX2_METAC</name>
<gene>
    <name evidence="1" type="primary">htpX2</name>
    <name type="ordered locus">MA_2111</name>
</gene>
<proteinExistence type="inferred from homology"/>
<organism>
    <name type="scientific">Methanosarcina acetivorans (strain ATCC 35395 / DSM 2834 / JCM 12185 / C2A)</name>
    <dbReference type="NCBI Taxonomy" id="188937"/>
    <lineage>
        <taxon>Archaea</taxon>
        <taxon>Methanobacteriati</taxon>
        <taxon>Methanobacteriota</taxon>
        <taxon>Stenosarchaea group</taxon>
        <taxon>Methanomicrobia</taxon>
        <taxon>Methanosarcinales</taxon>
        <taxon>Methanosarcinaceae</taxon>
        <taxon>Methanosarcina</taxon>
    </lineage>
</organism>
<evidence type="ECO:0000255" key="1">
    <source>
        <dbReference type="HAMAP-Rule" id="MF_00188"/>
    </source>
</evidence>
<feature type="chain" id="PRO_0000138916" description="Protease HtpX homolog 2">
    <location>
        <begin position="1"/>
        <end position="294"/>
    </location>
</feature>
<feature type="transmembrane region" description="Helical" evidence="1">
    <location>
        <begin position="15"/>
        <end position="35"/>
    </location>
</feature>
<feature type="transmembrane region" description="Helical" evidence="1">
    <location>
        <begin position="37"/>
        <end position="57"/>
    </location>
</feature>
<feature type="transmembrane region" description="Helical" evidence="1">
    <location>
        <begin position="151"/>
        <end position="171"/>
    </location>
</feature>
<feature type="transmembrane region" description="Helical" evidence="1">
    <location>
        <begin position="185"/>
        <end position="205"/>
    </location>
</feature>
<feature type="active site" evidence="1">
    <location>
        <position position="141"/>
    </location>
</feature>
<feature type="binding site" evidence="1">
    <location>
        <position position="140"/>
    </location>
    <ligand>
        <name>Zn(2+)</name>
        <dbReference type="ChEBI" id="CHEBI:29105"/>
        <note>catalytic</note>
    </ligand>
</feature>
<feature type="binding site" evidence="1">
    <location>
        <position position="144"/>
    </location>
    <ligand>
        <name>Zn(2+)</name>
        <dbReference type="ChEBI" id="CHEBI:29105"/>
        <note>catalytic</note>
    </ligand>
</feature>
<feature type="binding site" evidence="1">
    <location>
        <position position="213"/>
    </location>
    <ligand>
        <name>Zn(2+)</name>
        <dbReference type="ChEBI" id="CHEBI:29105"/>
        <note>catalytic</note>
    </ligand>
</feature>
<comment type="cofactor">
    <cofactor evidence="1">
        <name>Zn(2+)</name>
        <dbReference type="ChEBI" id="CHEBI:29105"/>
    </cofactor>
    <text evidence="1">Binds 1 zinc ion per subunit.</text>
</comment>
<comment type="subcellular location">
    <subcellularLocation>
        <location evidence="1">Cell membrane</location>
        <topology evidence="1">Multi-pass membrane protein</topology>
    </subcellularLocation>
</comment>
<comment type="similarity">
    <text evidence="1">Belongs to the peptidase M48B family.</text>
</comment>
<reference key="1">
    <citation type="journal article" date="2002" name="Genome Res.">
        <title>The genome of Methanosarcina acetivorans reveals extensive metabolic and physiological diversity.</title>
        <authorList>
            <person name="Galagan J.E."/>
            <person name="Nusbaum C."/>
            <person name="Roy A."/>
            <person name="Endrizzi M.G."/>
            <person name="Macdonald P."/>
            <person name="FitzHugh W."/>
            <person name="Calvo S."/>
            <person name="Engels R."/>
            <person name="Smirnov S."/>
            <person name="Atnoor D."/>
            <person name="Brown A."/>
            <person name="Allen N."/>
            <person name="Naylor J."/>
            <person name="Stange-Thomann N."/>
            <person name="DeArellano K."/>
            <person name="Johnson R."/>
            <person name="Linton L."/>
            <person name="McEwan P."/>
            <person name="McKernan K."/>
            <person name="Talamas J."/>
            <person name="Tirrell A."/>
            <person name="Ye W."/>
            <person name="Zimmer A."/>
            <person name="Barber R.D."/>
            <person name="Cann I."/>
            <person name="Graham D.E."/>
            <person name="Grahame D.A."/>
            <person name="Guss A.M."/>
            <person name="Hedderich R."/>
            <person name="Ingram-Smith C."/>
            <person name="Kuettner H.C."/>
            <person name="Krzycki J.A."/>
            <person name="Leigh J.A."/>
            <person name="Li W."/>
            <person name="Liu J."/>
            <person name="Mukhopadhyay B."/>
            <person name="Reeve J.N."/>
            <person name="Smith K."/>
            <person name="Springer T.A."/>
            <person name="Umayam L.A."/>
            <person name="White O."/>
            <person name="White R.H."/>
            <person name="de Macario E.C."/>
            <person name="Ferry J.G."/>
            <person name="Jarrell K.F."/>
            <person name="Jing H."/>
            <person name="Macario A.J.L."/>
            <person name="Paulsen I.T."/>
            <person name="Pritchett M."/>
            <person name="Sowers K.R."/>
            <person name="Swanson R.V."/>
            <person name="Zinder S.H."/>
            <person name="Lander E."/>
            <person name="Metcalf W.W."/>
            <person name="Birren B."/>
        </authorList>
    </citation>
    <scope>NUCLEOTIDE SEQUENCE [LARGE SCALE GENOMIC DNA]</scope>
    <source>
        <strain>ATCC 35395 / DSM 2834 / JCM 12185 / C2A</strain>
    </source>
</reference>